<comment type="function">
    <text evidence="1">Involved in the biosynthesis of the chorismate, which leads to the biosynthesis of aromatic amino acids. Catalyzes the reversible NADPH linked reduction of 3-dehydroshikimate (DHSA) to yield shikimate (SA).</text>
</comment>
<comment type="catalytic activity">
    <reaction evidence="1">
        <text>shikimate + NADP(+) = 3-dehydroshikimate + NADPH + H(+)</text>
        <dbReference type="Rhea" id="RHEA:17737"/>
        <dbReference type="ChEBI" id="CHEBI:15378"/>
        <dbReference type="ChEBI" id="CHEBI:16630"/>
        <dbReference type="ChEBI" id="CHEBI:36208"/>
        <dbReference type="ChEBI" id="CHEBI:57783"/>
        <dbReference type="ChEBI" id="CHEBI:58349"/>
        <dbReference type="EC" id="1.1.1.25"/>
    </reaction>
</comment>
<comment type="pathway">
    <text evidence="1">Metabolic intermediate biosynthesis; chorismate biosynthesis; chorismate from D-erythrose 4-phosphate and phosphoenolpyruvate: step 4/7.</text>
</comment>
<comment type="subunit">
    <text evidence="1">Homodimer.</text>
</comment>
<comment type="similarity">
    <text evidence="1">Belongs to the shikimate dehydrogenase family.</text>
</comment>
<reference key="1">
    <citation type="submission" date="2008-06" db="EMBL/GenBank/DDBJ databases">
        <title>Complete sequence of Pelodictyon phaeoclathratiforme BU-1.</title>
        <authorList>
            <consortium name="US DOE Joint Genome Institute"/>
            <person name="Lucas S."/>
            <person name="Copeland A."/>
            <person name="Lapidus A."/>
            <person name="Glavina del Rio T."/>
            <person name="Dalin E."/>
            <person name="Tice H."/>
            <person name="Bruce D."/>
            <person name="Goodwin L."/>
            <person name="Pitluck S."/>
            <person name="Schmutz J."/>
            <person name="Larimer F."/>
            <person name="Land M."/>
            <person name="Hauser L."/>
            <person name="Kyrpides N."/>
            <person name="Mikhailova N."/>
            <person name="Liu Z."/>
            <person name="Li T."/>
            <person name="Zhao F."/>
            <person name="Overmann J."/>
            <person name="Bryant D.A."/>
            <person name="Richardson P."/>
        </authorList>
    </citation>
    <scope>NUCLEOTIDE SEQUENCE [LARGE SCALE GENOMIC DNA]</scope>
    <source>
        <strain>DSM 5477 / BU-1</strain>
    </source>
</reference>
<name>AROE_PELPB</name>
<accession>B4SD14</accession>
<protein>
    <recommendedName>
        <fullName evidence="1">Shikimate dehydrogenase (NADP(+))</fullName>
        <shortName evidence="1">SDH</shortName>
        <ecNumber evidence="1">1.1.1.25</ecNumber>
    </recommendedName>
</protein>
<organism>
    <name type="scientific">Pelodictyon phaeoclathratiforme (strain DSM 5477 / BU-1)</name>
    <dbReference type="NCBI Taxonomy" id="324925"/>
    <lineage>
        <taxon>Bacteria</taxon>
        <taxon>Pseudomonadati</taxon>
        <taxon>Chlorobiota</taxon>
        <taxon>Chlorobiia</taxon>
        <taxon>Chlorobiales</taxon>
        <taxon>Chlorobiaceae</taxon>
        <taxon>Chlorobium/Pelodictyon group</taxon>
        <taxon>Pelodictyon</taxon>
    </lineage>
</organism>
<proteinExistence type="inferred from homology"/>
<evidence type="ECO:0000255" key="1">
    <source>
        <dbReference type="HAMAP-Rule" id="MF_00222"/>
    </source>
</evidence>
<gene>
    <name evidence="1" type="primary">aroE</name>
    <name type="ordered locus">Ppha_2066</name>
</gene>
<feature type="chain" id="PRO_1000100128" description="Shikimate dehydrogenase (NADP(+))">
    <location>
        <begin position="1"/>
        <end position="283"/>
    </location>
</feature>
<feature type="active site" description="Proton acceptor" evidence="1">
    <location>
        <position position="70"/>
    </location>
</feature>
<feature type="binding site" evidence="1">
    <location>
        <begin position="18"/>
        <end position="20"/>
    </location>
    <ligand>
        <name>shikimate</name>
        <dbReference type="ChEBI" id="CHEBI:36208"/>
    </ligand>
</feature>
<feature type="binding site" evidence="1">
    <location>
        <position position="66"/>
    </location>
    <ligand>
        <name>shikimate</name>
        <dbReference type="ChEBI" id="CHEBI:36208"/>
    </ligand>
</feature>
<feature type="binding site" evidence="1">
    <location>
        <position position="91"/>
    </location>
    <ligand>
        <name>shikimate</name>
        <dbReference type="ChEBI" id="CHEBI:36208"/>
    </ligand>
</feature>
<feature type="binding site" evidence="1">
    <location>
        <position position="106"/>
    </location>
    <ligand>
        <name>shikimate</name>
        <dbReference type="ChEBI" id="CHEBI:36208"/>
    </ligand>
</feature>
<feature type="binding site" evidence="1">
    <location>
        <begin position="130"/>
        <end position="134"/>
    </location>
    <ligand>
        <name>NADP(+)</name>
        <dbReference type="ChEBI" id="CHEBI:58349"/>
    </ligand>
</feature>
<feature type="binding site" evidence="1">
    <location>
        <position position="225"/>
    </location>
    <ligand>
        <name>NADP(+)</name>
        <dbReference type="ChEBI" id="CHEBI:58349"/>
    </ligand>
</feature>
<feature type="binding site" evidence="1">
    <location>
        <position position="227"/>
    </location>
    <ligand>
        <name>shikimate</name>
        <dbReference type="ChEBI" id="CHEBI:36208"/>
    </ligand>
</feature>
<feature type="binding site" evidence="1">
    <location>
        <position position="248"/>
    </location>
    <ligand>
        <name>NADP(+)</name>
        <dbReference type="ChEBI" id="CHEBI:58349"/>
    </ligand>
</feature>
<sequence length="283" mass="30466">MTKSTKILGLIGRAVDYSYSPLIHNTACRLLGLSYHYTVFNIADPSMIPDALRGAKALGIAGFNVTIPYKKSVVPFLDALSAEAASIQAVNTIVNEGGKLTGHNTDIAGFAAPLLPYRESIRGKTLSIFGAGGAALAAIEAFIRFFSPKEILLFVRNPEKASLLLEESGHDKSAPVRILCSDNPEIIRECRVIVNATPIGTRGNNDSPLPLDRELLHPGQIVYDMVYNPLDTPLLLAAQKAGAATISGIEMLIGQAEHSFTLWTGMQMPVKAVKESLLQEIQQ</sequence>
<keyword id="KW-0028">Amino-acid biosynthesis</keyword>
<keyword id="KW-0057">Aromatic amino acid biosynthesis</keyword>
<keyword id="KW-0521">NADP</keyword>
<keyword id="KW-0560">Oxidoreductase</keyword>
<keyword id="KW-1185">Reference proteome</keyword>
<dbReference type="EC" id="1.1.1.25" evidence="1"/>
<dbReference type="EMBL" id="CP001110">
    <property type="protein sequence ID" value="ACF44273.1"/>
    <property type="molecule type" value="Genomic_DNA"/>
</dbReference>
<dbReference type="RefSeq" id="WP_012508752.1">
    <property type="nucleotide sequence ID" value="NC_011060.1"/>
</dbReference>
<dbReference type="SMR" id="B4SD14"/>
<dbReference type="STRING" id="324925.Ppha_2066"/>
<dbReference type="KEGG" id="pph:Ppha_2066"/>
<dbReference type="eggNOG" id="COG0169">
    <property type="taxonomic scope" value="Bacteria"/>
</dbReference>
<dbReference type="HOGENOM" id="CLU_044063_4_1_10"/>
<dbReference type="OrthoDB" id="9792692at2"/>
<dbReference type="UniPathway" id="UPA00053">
    <property type="reaction ID" value="UER00087"/>
</dbReference>
<dbReference type="Proteomes" id="UP000002724">
    <property type="component" value="Chromosome"/>
</dbReference>
<dbReference type="GO" id="GO:0005829">
    <property type="term" value="C:cytosol"/>
    <property type="evidence" value="ECO:0007669"/>
    <property type="project" value="TreeGrafter"/>
</dbReference>
<dbReference type="GO" id="GO:0050661">
    <property type="term" value="F:NADP binding"/>
    <property type="evidence" value="ECO:0007669"/>
    <property type="project" value="InterPro"/>
</dbReference>
<dbReference type="GO" id="GO:0004764">
    <property type="term" value="F:shikimate 3-dehydrogenase (NADP+) activity"/>
    <property type="evidence" value="ECO:0007669"/>
    <property type="project" value="UniProtKB-UniRule"/>
</dbReference>
<dbReference type="GO" id="GO:0008652">
    <property type="term" value="P:amino acid biosynthetic process"/>
    <property type="evidence" value="ECO:0007669"/>
    <property type="project" value="UniProtKB-KW"/>
</dbReference>
<dbReference type="GO" id="GO:0009073">
    <property type="term" value="P:aromatic amino acid family biosynthetic process"/>
    <property type="evidence" value="ECO:0007669"/>
    <property type="project" value="UniProtKB-KW"/>
</dbReference>
<dbReference type="GO" id="GO:0009423">
    <property type="term" value="P:chorismate biosynthetic process"/>
    <property type="evidence" value="ECO:0007669"/>
    <property type="project" value="UniProtKB-UniRule"/>
</dbReference>
<dbReference type="GO" id="GO:0019632">
    <property type="term" value="P:shikimate metabolic process"/>
    <property type="evidence" value="ECO:0007669"/>
    <property type="project" value="InterPro"/>
</dbReference>
<dbReference type="CDD" id="cd01065">
    <property type="entry name" value="NAD_bind_Shikimate_DH"/>
    <property type="match status" value="1"/>
</dbReference>
<dbReference type="Gene3D" id="3.40.50.10860">
    <property type="entry name" value="Leucine Dehydrogenase, chain A, domain 1"/>
    <property type="match status" value="1"/>
</dbReference>
<dbReference type="Gene3D" id="3.40.50.720">
    <property type="entry name" value="NAD(P)-binding Rossmann-like Domain"/>
    <property type="match status" value="1"/>
</dbReference>
<dbReference type="HAMAP" id="MF_00222">
    <property type="entry name" value="Shikimate_DH_AroE"/>
    <property type="match status" value="1"/>
</dbReference>
<dbReference type="InterPro" id="IPR046346">
    <property type="entry name" value="Aminoacid_DH-like_N_sf"/>
</dbReference>
<dbReference type="InterPro" id="IPR036291">
    <property type="entry name" value="NAD(P)-bd_dom_sf"/>
</dbReference>
<dbReference type="InterPro" id="IPR041121">
    <property type="entry name" value="SDH_C"/>
</dbReference>
<dbReference type="InterPro" id="IPR011342">
    <property type="entry name" value="Shikimate_DH"/>
</dbReference>
<dbReference type="InterPro" id="IPR013708">
    <property type="entry name" value="Shikimate_DH-bd_N"/>
</dbReference>
<dbReference type="InterPro" id="IPR022893">
    <property type="entry name" value="Shikimate_DH_fam"/>
</dbReference>
<dbReference type="NCBIfam" id="TIGR00507">
    <property type="entry name" value="aroE"/>
    <property type="match status" value="1"/>
</dbReference>
<dbReference type="NCBIfam" id="NF001319">
    <property type="entry name" value="PRK00258.3-3"/>
    <property type="match status" value="1"/>
</dbReference>
<dbReference type="PANTHER" id="PTHR21089:SF1">
    <property type="entry name" value="BIFUNCTIONAL 3-DEHYDROQUINATE DEHYDRATASE_SHIKIMATE DEHYDROGENASE, CHLOROPLASTIC"/>
    <property type="match status" value="1"/>
</dbReference>
<dbReference type="PANTHER" id="PTHR21089">
    <property type="entry name" value="SHIKIMATE DEHYDROGENASE"/>
    <property type="match status" value="1"/>
</dbReference>
<dbReference type="Pfam" id="PF18317">
    <property type="entry name" value="SDH_C"/>
    <property type="match status" value="1"/>
</dbReference>
<dbReference type="Pfam" id="PF08501">
    <property type="entry name" value="Shikimate_dh_N"/>
    <property type="match status" value="1"/>
</dbReference>
<dbReference type="SUPFAM" id="SSF53223">
    <property type="entry name" value="Aminoacid dehydrogenase-like, N-terminal domain"/>
    <property type="match status" value="1"/>
</dbReference>
<dbReference type="SUPFAM" id="SSF51735">
    <property type="entry name" value="NAD(P)-binding Rossmann-fold domains"/>
    <property type="match status" value="1"/>
</dbReference>